<proteinExistence type="evidence at transcript level"/>
<name>APDF_EMENI</name>
<comment type="function">
    <text evidence="4">Efflux pump that may be involved in the secretion of aspyridones (PubMed:17369821).</text>
</comment>
<comment type="subcellular location">
    <subcellularLocation>
        <location evidence="6">Cell membrane</location>
        <topology evidence="1">Multi-pass membrane protein</topology>
    </subcellularLocation>
</comment>
<comment type="induction">
    <text evidence="4">Expression is positively regulated by the aspyridones cluster specific transcription regulator apdR (PubMed:17369821).</text>
</comment>
<comment type="similarity">
    <text evidence="6">Belongs to the major facilitator superfamily. Monocarboxylate porter (TC 2.A.1.13) family.</text>
</comment>
<evidence type="ECO:0000255" key="1"/>
<evidence type="ECO:0000255" key="2">
    <source>
        <dbReference type="PROSITE-ProRule" id="PRU00498"/>
    </source>
</evidence>
<evidence type="ECO:0000256" key="3">
    <source>
        <dbReference type="SAM" id="MobiDB-lite"/>
    </source>
</evidence>
<evidence type="ECO:0000269" key="4">
    <source>
    </source>
</evidence>
<evidence type="ECO:0000303" key="5">
    <source>
    </source>
</evidence>
<evidence type="ECO:0000305" key="6"/>
<organism>
    <name type="scientific">Emericella nidulans (strain FGSC A4 / ATCC 38163 / CBS 112.46 / NRRL 194 / M139)</name>
    <name type="common">Aspergillus nidulans</name>
    <dbReference type="NCBI Taxonomy" id="227321"/>
    <lineage>
        <taxon>Eukaryota</taxon>
        <taxon>Fungi</taxon>
        <taxon>Dikarya</taxon>
        <taxon>Ascomycota</taxon>
        <taxon>Pezizomycotina</taxon>
        <taxon>Eurotiomycetes</taxon>
        <taxon>Eurotiomycetidae</taxon>
        <taxon>Eurotiales</taxon>
        <taxon>Aspergillaceae</taxon>
        <taxon>Aspergillus</taxon>
        <taxon>Aspergillus subgen. Nidulantes</taxon>
    </lineage>
</organism>
<reference key="1">
    <citation type="journal article" date="2005" name="Nature">
        <title>Sequencing of Aspergillus nidulans and comparative analysis with A. fumigatus and A. oryzae.</title>
        <authorList>
            <person name="Galagan J.E."/>
            <person name="Calvo S.E."/>
            <person name="Cuomo C."/>
            <person name="Ma L.-J."/>
            <person name="Wortman J.R."/>
            <person name="Batzoglou S."/>
            <person name="Lee S.-I."/>
            <person name="Bastuerkmen M."/>
            <person name="Spevak C.C."/>
            <person name="Clutterbuck J."/>
            <person name="Kapitonov V."/>
            <person name="Jurka J."/>
            <person name="Scazzocchio C."/>
            <person name="Farman M.L."/>
            <person name="Butler J."/>
            <person name="Purcell S."/>
            <person name="Harris S."/>
            <person name="Braus G.H."/>
            <person name="Draht O."/>
            <person name="Busch S."/>
            <person name="D'Enfert C."/>
            <person name="Bouchier C."/>
            <person name="Goldman G.H."/>
            <person name="Bell-Pedersen D."/>
            <person name="Griffiths-Jones S."/>
            <person name="Doonan J.H."/>
            <person name="Yu J."/>
            <person name="Vienken K."/>
            <person name="Pain A."/>
            <person name="Freitag M."/>
            <person name="Selker E.U."/>
            <person name="Archer D.B."/>
            <person name="Penalva M.A."/>
            <person name="Oakley B.R."/>
            <person name="Momany M."/>
            <person name="Tanaka T."/>
            <person name="Kumagai T."/>
            <person name="Asai K."/>
            <person name="Machida M."/>
            <person name="Nierman W.C."/>
            <person name="Denning D.W."/>
            <person name="Caddick M.X."/>
            <person name="Hynes M."/>
            <person name="Paoletti M."/>
            <person name="Fischer R."/>
            <person name="Miller B.L."/>
            <person name="Dyer P.S."/>
            <person name="Sachs M.S."/>
            <person name="Osmani S.A."/>
            <person name="Birren B.W."/>
        </authorList>
    </citation>
    <scope>NUCLEOTIDE SEQUENCE [LARGE SCALE GENOMIC DNA]</scope>
    <source>
        <strain>FGSC A4 / ATCC 38163 / CBS 112.46 / NRRL 194 / M139</strain>
    </source>
</reference>
<reference key="2">
    <citation type="journal article" date="2009" name="Fungal Genet. Biol.">
        <title>The 2008 update of the Aspergillus nidulans genome annotation: a community effort.</title>
        <authorList>
            <person name="Wortman J.R."/>
            <person name="Gilsenan J.M."/>
            <person name="Joardar V."/>
            <person name="Deegan J."/>
            <person name="Clutterbuck J."/>
            <person name="Andersen M.R."/>
            <person name="Archer D."/>
            <person name="Bencina M."/>
            <person name="Braus G."/>
            <person name="Coutinho P."/>
            <person name="von Dohren H."/>
            <person name="Doonan J."/>
            <person name="Driessen A.J."/>
            <person name="Durek P."/>
            <person name="Espeso E."/>
            <person name="Fekete E."/>
            <person name="Flipphi M."/>
            <person name="Estrada C.G."/>
            <person name="Geysens S."/>
            <person name="Goldman G."/>
            <person name="de Groot P.W."/>
            <person name="Hansen K."/>
            <person name="Harris S.D."/>
            <person name="Heinekamp T."/>
            <person name="Helmstaedt K."/>
            <person name="Henrissat B."/>
            <person name="Hofmann G."/>
            <person name="Homan T."/>
            <person name="Horio T."/>
            <person name="Horiuchi H."/>
            <person name="James S."/>
            <person name="Jones M."/>
            <person name="Karaffa L."/>
            <person name="Karanyi Z."/>
            <person name="Kato M."/>
            <person name="Keller N."/>
            <person name="Kelly D.E."/>
            <person name="Kiel J.A."/>
            <person name="Kim J.M."/>
            <person name="van der Klei I.J."/>
            <person name="Klis F.M."/>
            <person name="Kovalchuk A."/>
            <person name="Krasevec N."/>
            <person name="Kubicek C.P."/>
            <person name="Liu B."/>
            <person name="Maccabe A."/>
            <person name="Meyer V."/>
            <person name="Mirabito P."/>
            <person name="Miskei M."/>
            <person name="Mos M."/>
            <person name="Mullins J."/>
            <person name="Nelson D.R."/>
            <person name="Nielsen J."/>
            <person name="Oakley B.R."/>
            <person name="Osmani S.A."/>
            <person name="Pakula T."/>
            <person name="Paszewski A."/>
            <person name="Paulsen I."/>
            <person name="Pilsyk S."/>
            <person name="Pocsi I."/>
            <person name="Punt P.J."/>
            <person name="Ram A.F."/>
            <person name="Ren Q."/>
            <person name="Robellet X."/>
            <person name="Robson G."/>
            <person name="Seiboth B."/>
            <person name="van Solingen P."/>
            <person name="Specht T."/>
            <person name="Sun J."/>
            <person name="Taheri-Talesh N."/>
            <person name="Takeshita N."/>
            <person name="Ussery D."/>
            <person name="vanKuyk P.A."/>
            <person name="Visser H."/>
            <person name="van de Vondervoort P.J."/>
            <person name="de Vries R.P."/>
            <person name="Walton J."/>
            <person name="Xiang X."/>
            <person name="Xiong Y."/>
            <person name="Zeng A.P."/>
            <person name="Brandt B.W."/>
            <person name="Cornell M.J."/>
            <person name="van den Hondel C.A."/>
            <person name="Visser J."/>
            <person name="Oliver S.G."/>
            <person name="Turner G."/>
        </authorList>
    </citation>
    <scope>GENOME REANNOTATION</scope>
    <source>
        <strain>FGSC A4 / ATCC 38163 / CBS 112.46 / NRRL 194 / M139</strain>
    </source>
</reference>
<reference key="3">
    <citation type="journal article" date="2007" name="Nat. Chem. Biol.">
        <title>Genomics-driven discovery of PKS-NRPS hybrid metabolites from Aspergillus nidulans.</title>
        <authorList>
            <person name="Bergmann S."/>
            <person name="Schuemann J."/>
            <person name="Scherlach K."/>
            <person name="Lange C."/>
            <person name="Brakhage A.A."/>
            <person name="Hertweck C."/>
        </authorList>
    </citation>
    <scope>FUNCTION</scope>
    <scope>INDUCTION</scope>
</reference>
<gene>
    <name evidence="5" type="primary">apdF</name>
    <name type="ORF">AN8413</name>
</gene>
<accession>Q5ATG7</accession>
<accession>C8VEB4</accession>
<feature type="chain" id="PRO_0000438460" description="Aspyridones efflux protein apdF">
    <location>
        <begin position="1"/>
        <end position="487"/>
    </location>
</feature>
<feature type="transmembrane region" description="Helical" evidence="1">
    <location>
        <begin position="35"/>
        <end position="55"/>
    </location>
</feature>
<feature type="transmembrane region" description="Helical" evidence="1">
    <location>
        <begin position="75"/>
        <end position="95"/>
    </location>
</feature>
<feature type="transmembrane region" description="Helical" evidence="1">
    <location>
        <begin position="99"/>
        <end position="119"/>
    </location>
</feature>
<feature type="transmembrane region" description="Helical" evidence="1">
    <location>
        <begin position="126"/>
        <end position="146"/>
    </location>
</feature>
<feature type="transmembrane region" description="Helical" evidence="1">
    <location>
        <begin position="159"/>
        <end position="179"/>
    </location>
</feature>
<feature type="transmembrane region" description="Helical" evidence="1">
    <location>
        <begin position="191"/>
        <end position="211"/>
    </location>
</feature>
<feature type="transmembrane region" description="Helical" evidence="1">
    <location>
        <begin position="234"/>
        <end position="254"/>
    </location>
</feature>
<feature type="transmembrane region" description="Helical" evidence="1">
    <location>
        <begin position="262"/>
        <end position="282"/>
    </location>
</feature>
<feature type="transmembrane region" description="Helical" evidence="1">
    <location>
        <begin position="293"/>
        <end position="313"/>
    </location>
</feature>
<feature type="transmembrane region" description="Helical" evidence="1">
    <location>
        <begin position="322"/>
        <end position="342"/>
    </location>
</feature>
<feature type="transmembrane region" description="Helical" evidence="1">
    <location>
        <begin position="354"/>
        <end position="374"/>
    </location>
</feature>
<feature type="transmembrane region" description="Helical" evidence="1">
    <location>
        <begin position="385"/>
        <end position="405"/>
    </location>
</feature>
<feature type="region of interest" description="Disordered" evidence="3">
    <location>
        <begin position="1"/>
        <end position="25"/>
    </location>
</feature>
<feature type="compositionally biased region" description="Basic and acidic residues" evidence="3">
    <location>
        <begin position="1"/>
        <end position="21"/>
    </location>
</feature>
<feature type="glycosylation site" description="N-linked (GlcNAc...) asparagine" evidence="2">
    <location>
        <position position="67"/>
    </location>
</feature>
<feature type="glycosylation site" description="N-linked (GlcNAc...) asparagine" evidence="2">
    <location>
        <position position="319"/>
    </location>
</feature>
<keyword id="KW-1003">Cell membrane</keyword>
<keyword id="KW-0325">Glycoprotein</keyword>
<keyword id="KW-0472">Membrane</keyword>
<keyword id="KW-1185">Reference proteome</keyword>
<keyword id="KW-0812">Transmembrane</keyword>
<keyword id="KW-1133">Transmembrane helix</keyword>
<keyword id="KW-0813">Transport</keyword>
<sequence>MSSVRESSKDESIVHPPKAPESEPFPDGGARAWMVALGAGGVLFCTFGYVNAFGVYQDYYITHQLSNYSASDIAWIGSVQTFFLFGSGLVGGPLFDRYGAKVIWAPAVLVIFSVMMTSLCTKFYQFFLAQGILGGMSMGLSLAPALSSTAQYFQKKRAAAMGITIAGSSLGGVIFPIALEQMLYSSLGFAWAVRIVGFIILGVMSFAVLGIRARLPPKRQRFLKLEAFKKTHYVATLTAVFFLNVGIFTPFFYLPLYGQSHGMSTGLAFYLIAIQNASSFFGRLVPGVIADKIGPYNMLSTVSIITAIITFCWIRMTTNASIIVFSVLYGFFSGGIIGITPAAIANCAGHPQEIGTYIGMGMAVMSVATLIGPPINGALLNEYGGFLQVQIFSAAVMMFGGVLAFGAKMISFSGEGKGMRKFDHAVAGLAYYVREGGSRMEHIYFGSVAIVAGHLHGPVCAQNKRQMLVTGIGAEMVYVLEYFVEAG</sequence>
<dbReference type="EMBL" id="BN001305">
    <property type="protein sequence ID" value="CBF80489.1"/>
    <property type="molecule type" value="Genomic_DNA"/>
</dbReference>
<dbReference type="EMBL" id="AACD01000153">
    <property type="protein sequence ID" value="EAA67035.1"/>
    <property type="molecule type" value="Genomic_DNA"/>
</dbReference>
<dbReference type="RefSeq" id="XP_681682.1">
    <property type="nucleotide sequence ID" value="XM_676590.1"/>
</dbReference>
<dbReference type="SMR" id="Q5ATG7"/>
<dbReference type="STRING" id="227321.Q5ATG7"/>
<dbReference type="GlyCosmos" id="Q5ATG7">
    <property type="glycosylation" value="2 sites, No reported glycans"/>
</dbReference>
<dbReference type="EnsemblFungi" id="CBF80489">
    <property type="protein sequence ID" value="CBF80489"/>
    <property type="gene ID" value="ANIA_08413"/>
</dbReference>
<dbReference type="KEGG" id="ani:ANIA_08413"/>
<dbReference type="eggNOG" id="KOG2504">
    <property type="taxonomic scope" value="Eukaryota"/>
</dbReference>
<dbReference type="HOGENOM" id="CLU_001265_1_1_1"/>
<dbReference type="InParanoid" id="Q5ATG7"/>
<dbReference type="OMA" id="ITFCWIR"/>
<dbReference type="OrthoDB" id="6499973at2759"/>
<dbReference type="Proteomes" id="UP000000560">
    <property type="component" value="Chromosome V"/>
</dbReference>
<dbReference type="GO" id="GO:0005886">
    <property type="term" value="C:plasma membrane"/>
    <property type="evidence" value="ECO:0000318"/>
    <property type="project" value="GO_Central"/>
</dbReference>
<dbReference type="GO" id="GO:0022857">
    <property type="term" value="F:transmembrane transporter activity"/>
    <property type="evidence" value="ECO:0000318"/>
    <property type="project" value="GO_Central"/>
</dbReference>
<dbReference type="CDD" id="cd17352">
    <property type="entry name" value="MFS_MCT_SLC16"/>
    <property type="match status" value="1"/>
</dbReference>
<dbReference type="Gene3D" id="1.20.1250.20">
    <property type="entry name" value="MFS general substrate transporter like domains"/>
    <property type="match status" value="2"/>
</dbReference>
<dbReference type="InterPro" id="IPR011701">
    <property type="entry name" value="MFS"/>
</dbReference>
<dbReference type="InterPro" id="IPR020846">
    <property type="entry name" value="MFS_dom"/>
</dbReference>
<dbReference type="InterPro" id="IPR036259">
    <property type="entry name" value="MFS_trans_sf"/>
</dbReference>
<dbReference type="InterPro" id="IPR050327">
    <property type="entry name" value="Proton-linked_MCT"/>
</dbReference>
<dbReference type="PANTHER" id="PTHR11360:SF281">
    <property type="entry name" value="ASPYRIDONES EFFLUX PROTEIN APDF-RELATED"/>
    <property type="match status" value="1"/>
</dbReference>
<dbReference type="PANTHER" id="PTHR11360">
    <property type="entry name" value="MONOCARBOXYLATE TRANSPORTER"/>
    <property type="match status" value="1"/>
</dbReference>
<dbReference type="Pfam" id="PF07690">
    <property type="entry name" value="MFS_1"/>
    <property type="match status" value="1"/>
</dbReference>
<dbReference type="SUPFAM" id="SSF103473">
    <property type="entry name" value="MFS general substrate transporter"/>
    <property type="match status" value="1"/>
</dbReference>
<dbReference type="PROSITE" id="PS50850">
    <property type="entry name" value="MFS"/>
    <property type="match status" value="1"/>
</dbReference>
<protein>
    <recommendedName>
        <fullName evidence="5">Aspyridones efflux protein apdF</fullName>
    </recommendedName>
    <alternativeName>
        <fullName evidence="5">Aspyridones biosynthesis protein F</fullName>
    </alternativeName>
</protein>